<gene>
    <name type="ordered locus">SA0704</name>
</gene>
<evidence type="ECO:0000250" key="1"/>
<evidence type="ECO:0000250" key="2">
    <source>
        <dbReference type="UniProtKB" id="Q9X1H9"/>
    </source>
</evidence>
<evidence type="ECO:0000255" key="3">
    <source>
        <dbReference type="PROSITE-ProRule" id="PRU00815"/>
    </source>
</evidence>
<comment type="function">
    <text evidence="1">May bind long-chain fatty acids, such as palmitate, and may play a role in lipid transport or fatty acid metabolism.</text>
</comment>
<protein>
    <recommendedName>
        <fullName>DegV domain-containing protein SA0704</fullName>
    </recommendedName>
</protein>
<feature type="chain" id="PRO_0000209782" description="DegV domain-containing protein SA0704">
    <location>
        <begin position="1"/>
        <end position="288"/>
    </location>
</feature>
<feature type="domain" description="DegV" evidence="3">
    <location>
        <begin position="3"/>
        <end position="282"/>
    </location>
</feature>
<feature type="binding site" evidence="2">
    <location>
        <position position="62"/>
    </location>
    <ligand>
        <name>hexadecanoate</name>
        <dbReference type="ChEBI" id="CHEBI:7896"/>
    </ligand>
</feature>
<feature type="binding site" evidence="2">
    <location>
        <position position="95"/>
    </location>
    <ligand>
        <name>hexadecanoate</name>
        <dbReference type="ChEBI" id="CHEBI:7896"/>
    </ligand>
</feature>
<accession>P0A0N1</accession>
<accession>Q99VM6</accession>
<reference key="1">
    <citation type="journal article" date="2001" name="Lancet">
        <title>Whole genome sequencing of meticillin-resistant Staphylococcus aureus.</title>
        <authorList>
            <person name="Kuroda M."/>
            <person name="Ohta T."/>
            <person name="Uchiyama I."/>
            <person name="Baba T."/>
            <person name="Yuzawa H."/>
            <person name="Kobayashi I."/>
            <person name="Cui L."/>
            <person name="Oguchi A."/>
            <person name="Aoki K."/>
            <person name="Nagai Y."/>
            <person name="Lian J.-Q."/>
            <person name="Ito T."/>
            <person name="Kanamori M."/>
            <person name="Matsumaru H."/>
            <person name="Maruyama A."/>
            <person name="Murakami H."/>
            <person name="Hosoyama A."/>
            <person name="Mizutani-Ui Y."/>
            <person name="Takahashi N.K."/>
            <person name="Sawano T."/>
            <person name="Inoue R."/>
            <person name="Kaito C."/>
            <person name="Sekimizu K."/>
            <person name="Hirakawa H."/>
            <person name="Kuhara S."/>
            <person name="Goto S."/>
            <person name="Yabuzaki J."/>
            <person name="Kanehisa M."/>
            <person name="Yamashita A."/>
            <person name="Oshima K."/>
            <person name="Furuya K."/>
            <person name="Yoshino C."/>
            <person name="Shiba T."/>
            <person name="Hattori M."/>
            <person name="Ogasawara N."/>
            <person name="Hayashi H."/>
            <person name="Hiramatsu K."/>
        </authorList>
    </citation>
    <scope>NUCLEOTIDE SEQUENCE [LARGE SCALE GENOMIC DNA]</scope>
    <source>
        <strain>N315</strain>
    </source>
</reference>
<reference key="2">
    <citation type="submission" date="2007-10" db="UniProtKB">
        <title>Shotgun proteomic analysis of total and membrane protein extracts of S. aureus strain N315.</title>
        <authorList>
            <person name="Vaezzadeh A.R."/>
            <person name="Deshusses J."/>
            <person name="Lescuyer P."/>
            <person name="Hochstrasser D.F."/>
        </authorList>
    </citation>
    <scope>IDENTIFICATION BY MASS SPECTROMETRY [LARGE SCALE ANALYSIS]</scope>
    <source>
        <strain>N315</strain>
    </source>
</reference>
<sequence>MKIAVMTDSTSYLSQDLIDKYNIQIAPLSVTFDDGKNFTESNEIAIEEFYNKMASSQTIPTTSQPAIGEWITKYEMLRDQGYTDIIVICLSSGISGSYQSSYQAGEMVEGVNVHAFDSKLAAMIEGCYVLRAIEMVEEGYEPQQIIDDLTNMREHTGAYLIVDDLKNLQKSGRITGAQAWVGTLLKMKPVLKFEDGKIIPEEKVRTKKRAIQTLEKKVLDIVKDFEEVTLFVINGDHFEDGQALYKKLQEDCPSGYQVAYSEFGPVVAAHLGSGGLGLGYVGRKIRLT</sequence>
<dbReference type="EMBL" id="BA000018">
    <property type="protein sequence ID" value="BAB41937.1"/>
    <property type="molecule type" value="Genomic_DNA"/>
</dbReference>
<dbReference type="PIR" id="F89847">
    <property type="entry name" value="F89847"/>
</dbReference>
<dbReference type="SMR" id="P0A0N1"/>
<dbReference type="EnsemblBacteria" id="BAB41937">
    <property type="protein sequence ID" value="BAB41937"/>
    <property type="gene ID" value="BAB41937"/>
</dbReference>
<dbReference type="KEGG" id="sau:SA0704"/>
<dbReference type="HOGENOM" id="CLU_048251_3_1_9"/>
<dbReference type="GO" id="GO:0008289">
    <property type="term" value="F:lipid binding"/>
    <property type="evidence" value="ECO:0007669"/>
    <property type="project" value="UniProtKB-KW"/>
</dbReference>
<dbReference type="Gene3D" id="3.30.1180.10">
    <property type="match status" value="1"/>
</dbReference>
<dbReference type="Gene3D" id="3.40.50.10170">
    <property type="match status" value="1"/>
</dbReference>
<dbReference type="InterPro" id="IPR003797">
    <property type="entry name" value="DegV"/>
</dbReference>
<dbReference type="InterPro" id="IPR043168">
    <property type="entry name" value="DegV_C"/>
</dbReference>
<dbReference type="InterPro" id="IPR050270">
    <property type="entry name" value="DegV_domain_contain"/>
</dbReference>
<dbReference type="NCBIfam" id="TIGR00762">
    <property type="entry name" value="DegV"/>
    <property type="match status" value="1"/>
</dbReference>
<dbReference type="NCBIfam" id="NF038249">
    <property type="entry name" value="fatty_FakB1"/>
    <property type="match status" value="1"/>
</dbReference>
<dbReference type="PANTHER" id="PTHR33434">
    <property type="entry name" value="DEGV DOMAIN-CONTAINING PROTEIN DR_1986-RELATED"/>
    <property type="match status" value="1"/>
</dbReference>
<dbReference type="PANTHER" id="PTHR33434:SF2">
    <property type="entry name" value="FATTY ACID-BINDING PROTEIN TM_1468"/>
    <property type="match status" value="1"/>
</dbReference>
<dbReference type="Pfam" id="PF02645">
    <property type="entry name" value="DegV"/>
    <property type="match status" value="1"/>
</dbReference>
<dbReference type="SUPFAM" id="SSF82549">
    <property type="entry name" value="DAK1/DegV-like"/>
    <property type="match status" value="1"/>
</dbReference>
<dbReference type="PROSITE" id="PS51482">
    <property type="entry name" value="DEGV"/>
    <property type="match status" value="1"/>
</dbReference>
<organism>
    <name type="scientific">Staphylococcus aureus (strain N315)</name>
    <dbReference type="NCBI Taxonomy" id="158879"/>
    <lineage>
        <taxon>Bacteria</taxon>
        <taxon>Bacillati</taxon>
        <taxon>Bacillota</taxon>
        <taxon>Bacilli</taxon>
        <taxon>Bacillales</taxon>
        <taxon>Staphylococcaceae</taxon>
        <taxon>Staphylococcus</taxon>
    </lineage>
</organism>
<keyword id="KW-0446">Lipid-binding</keyword>
<proteinExistence type="evidence at protein level"/>
<name>Y704_STAAN</name>